<feature type="chain" id="PRO_1000128647" description="Small ribosomal subunit protein uS14">
    <location>
        <begin position="1"/>
        <end position="101"/>
    </location>
</feature>
<gene>
    <name evidence="1" type="primary">rpsN</name>
    <name type="ordered locus">XfasM23_0446</name>
</gene>
<organism>
    <name type="scientific">Xylella fastidiosa (strain M23)</name>
    <dbReference type="NCBI Taxonomy" id="405441"/>
    <lineage>
        <taxon>Bacteria</taxon>
        <taxon>Pseudomonadati</taxon>
        <taxon>Pseudomonadota</taxon>
        <taxon>Gammaproteobacteria</taxon>
        <taxon>Lysobacterales</taxon>
        <taxon>Lysobacteraceae</taxon>
        <taxon>Xylella</taxon>
    </lineage>
</organism>
<comment type="function">
    <text evidence="1">Binds 16S rRNA, required for the assembly of 30S particles and may also be responsible for determining the conformation of the 16S rRNA at the A site.</text>
</comment>
<comment type="subunit">
    <text evidence="1">Part of the 30S ribosomal subunit. Contacts proteins S3 and S10.</text>
</comment>
<comment type="similarity">
    <text evidence="1">Belongs to the universal ribosomal protein uS14 family.</text>
</comment>
<reference key="1">
    <citation type="journal article" date="2010" name="J. Bacteriol.">
        <title>Whole genome sequences of two Xylella fastidiosa strains (M12 and M23) causing almond leaf scorch disease in California.</title>
        <authorList>
            <person name="Chen J."/>
            <person name="Xie G."/>
            <person name="Han S."/>
            <person name="Chertkov O."/>
            <person name="Sims D."/>
            <person name="Civerolo E.L."/>
        </authorList>
    </citation>
    <scope>NUCLEOTIDE SEQUENCE [LARGE SCALE GENOMIC DNA]</scope>
    <source>
        <strain>M23</strain>
    </source>
</reference>
<protein>
    <recommendedName>
        <fullName evidence="1">Small ribosomal subunit protein uS14</fullName>
    </recommendedName>
    <alternativeName>
        <fullName evidence="2">30S ribosomal protein S14</fullName>
    </alternativeName>
</protein>
<dbReference type="EMBL" id="CP001011">
    <property type="protein sequence ID" value="ACB91893.1"/>
    <property type="molecule type" value="Genomic_DNA"/>
</dbReference>
<dbReference type="RefSeq" id="WP_004086535.1">
    <property type="nucleotide sequence ID" value="NC_010577.1"/>
</dbReference>
<dbReference type="SMR" id="B2I8I2"/>
<dbReference type="GeneID" id="93904152"/>
<dbReference type="KEGG" id="xfn:XfasM23_0446"/>
<dbReference type="HOGENOM" id="CLU_139869_0_1_6"/>
<dbReference type="Proteomes" id="UP000001698">
    <property type="component" value="Chromosome"/>
</dbReference>
<dbReference type="GO" id="GO:0005737">
    <property type="term" value="C:cytoplasm"/>
    <property type="evidence" value="ECO:0007669"/>
    <property type="project" value="UniProtKB-ARBA"/>
</dbReference>
<dbReference type="GO" id="GO:0015935">
    <property type="term" value="C:small ribosomal subunit"/>
    <property type="evidence" value="ECO:0007669"/>
    <property type="project" value="TreeGrafter"/>
</dbReference>
<dbReference type="GO" id="GO:0019843">
    <property type="term" value="F:rRNA binding"/>
    <property type="evidence" value="ECO:0007669"/>
    <property type="project" value="UniProtKB-UniRule"/>
</dbReference>
<dbReference type="GO" id="GO:0003735">
    <property type="term" value="F:structural constituent of ribosome"/>
    <property type="evidence" value="ECO:0007669"/>
    <property type="project" value="InterPro"/>
</dbReference>
<dbReference type="GO" id="GO:0006412">
    <property type="term" value="P:translation"/>
    <property type="evidence" value="ECO:0007669"/>
    <property type="project" value="UniProtKB-UniRule"/>
</dbReference>
<dbReference type="FunFam" id="1.10.287.1480:FF:000001">
    <property type="entry name" value="30S ribosomal protein S14"/>
    <property type="match status" value="1"/>
</dbReference>
<dbReference type="Gene3D" id="1.10.287.1480">
    <property type="match status" value="1"/>
</dbReference>
<dbReference type="HAMAP" id="MF_00537">
    <property type="entry name" value="Ribosomal_uS14_1"/>
    <property type="match status" value="1"/>
</dbReference>
<dbReference type="InterPro" id="IPR001209">
    <property type="entry name" value="Ribosomal_uS14"/>
</dbReference>
<dbReference type="InterPro" id="IPR023036">
    <property type="entry name" value="Ribosomal_uS14_bac/plastid"/>
</dbReference>
<dbReference type="NCBIfam" id="NF006477">
    <property type="entry name" value="PRK08881.1"/>
    <property type="match status" value="1"/>
</dbReference>
<dbReference type="PANTHER" id="PTHR19836">
    <property type="entry name" value="30S RIBOSOMAL PROTEIN S14"/>
    <property type="match status" value="1"/>
</dbReference>
<dbReference type="PANTHER" id="PTHR19836:SF19">
    <property type="entry name" value="SMALL RIBOSOMAL SUBUNIT PROTEIN US14M"/>
    <property type="match status" value="1"/>
</dbReference>
<dbReference type="Pfam" id="PF00253">
    <property type="entry name" value="Ribosomal_S14"/>
    <property type="match status" value="1"/>
</dbReference>
<dbReference type="SUPFAM" id="SSF57716">
    <property type="entry name" value="Glucocorticoid receptor-like (DNA-binding domain)"/>
    <property type="match status" value="1"/>
</dbReference>
<accession>B2I8I2</accession>
<proteinExistence type="inferred from homology"/>
<name>RS14_XYLF2</name>
<evidence type="ECO:0000255" key="1">
    <source>
        <dbReference type="HAMAP-Rule" id="MF_00537"/>
    </source>
</evidence>
<evidence type="ECO:0000305" key="2"/>
<keyword id="KW-0687">Ribonucleoprotein</keyword>
<keyword id="KW-0689">Ribosomal protein</keyword>
<keyword id="KW-0694">RNA-binding</keyword>
<keyword id="KW-0699">rRNA-binding</keyword>
<sequence>MAKISMINRDLKRKRLAKKFADKRLSLKKVISSYASSYEEKIEASCKLQKLPRDSSPTRLRNRCEISGRPRGVYCKFGLGRNKLREAAMRGDIPGLRKASW</sequence>